<organism>
    <name type="scientific">Borrelia garinii subsp. bavariensis (strain ATCC BAA-2496 / DSM 23469 / PBi)</name>
    <name type="common">Borreliella bavariensis</name>
    <dbReference type="NCBI Taxonomy" id="290434"/>
    <lineage>
        <taxon>Bacteria</taxon>
        <taxon>Pseudomonadati</taxon>
        <taxon>Spirochaetota</taxon>
        <taxon>Spirochaetia</taxon>
        <taxon>Spirochaetales</taxon>
        <taxon>Borreliaceae</taxon>
        <taxon>Borreliella</taxon>
    </lineage>
</organism>
<sequence>MKKMNLVTAALPYVNNIPHLGNLVQVLSADAFARYSKMSGIETLYICGTDEYGTATETKALIEKTSPLELCNKYYKIHKSIYKWFNIEFDIFGRTTNKHHQDIVQNFFLKLEKNGYIKERETEQFFCNKDSIFLADRYVIGECPECQSIAKGDQCENCSKLLNPIDLINPKCIICKNKPVLKKTNHLYIDLPKIKRKLEKWIKNSTTSKNWNTNALKMTNAFLRDGLKERAITRDLKWGIPVPKKGYENKVFYVWFDAPIGYISITKNLVKNWESWWKNNEQVNLVQFIGKDNILFHTVIFPSIEIGSKENWTILNQLSSSEYLNYENLKFSKSEGTGIFGNDVITTGIPSDVWRFYIYYNRPEKSDFQFMWQDLMERVNTELIDNFSNLVNRVLTFQKKFFGDVIETIEIQNKFWKQIIPKYNKILNLFKKTELKSALKEILKISSLGNKIFQDNEPWKRKDSSPQETKELISNLIYLIRDLSILMMPFIPETSKKIQQFFGNSYQFSTKILGTKSGIKRIEFTEILFNKLEQKKINNLKLKYSGEKNMEEKEQPENLFREKVLLKVVKINKIERNPEAKNLFILKLDDGTNENKQIVSSLEGYYTEKELLGKHIIIVDNLKPAKFRGIKSEGMLIAAEDKNKNFKIIIVEDSIKNPIPGERIILENDQNKDLICPPKIDINKFSKANIVAKDGELKINGINLILEHSKNKILSKDIPNGIVC</sequence>
<dbReference type="EC" id="6.1.1.10" evidence="1"/>
<dbReference type="EMBL" id="CP000013">
    <property type="protein sequence ID" value="AAU07436.1"/>
    <property type="molecule type" value="Genomic_DNA"/>
</dbReference>
<dbReference type="RefSeq" id="WP_011193894.1">
    <property type="nucleotide sequence ID" value="NZ_CP028872.1"/>
</dbReference>
<dbReference type="SMR" id="Q660T5"/>
<dbReference type="GeneID" id="45161380"/>
<dbReference type="KEGG" id="bga:BG0600"/>
<dbReference type="eggNOG" id="COG0073">
    <property type="taxonomic scope" value="Bacteria"/>
</dbReference>
<dbReference type="eggNOG" id="COG0143">
    <property type="taxonomic scope" value="Bacteria"/>
</dbReference>
<dbReference type="HOGENOM" id="CLU_009710_3_2_12"/>
<dbReference type="OrthoDB" id="9810191at2"/>
<dbReference type="Proteomes" id="UP000002276">
    <property type="component" value="Chromosome"/>
</dbReference>
<dbReference type="GO" id="GO:0017101">
    <property type="term" value="C:aminoacyl-tRNA synthetase multienzyme complex"/>
    <property type="evidence" value="ECO:0007669"/>
    <property type="project" value="TreeGrafter"/>
</dbReference>
<dbReference type="GO" id="GO:0005829">
    <property type="term" value="C:cytosol"/>
    <property type="evidence" value="ECO:0007669"/>
    <property type="project" value="TreeGrafter"/>
</dbReference>
<dbReference type="GO" id="GO:0005524">
    <property type="term" value="F:ATP binding"/>
    <property type="evidence" value="ECO:0007669"/>
    <property type="project" value="UniProtKB-UniRule"/>
</dbReference>
<dbReference type="GO" id="GO:0046872">
    <property type="term" value="F:metal ion binding"/>
    <property type="evidence" value="ECO:0007669"/>
    <property type="project" value="UniProtKB-KW"/>
</dbReference>
<dbReference type="GO" id="GO:0004825">
    <property type="term" value="F:methionine-tRNA ligase activity"/>
    <property type="evidence" value="ECO:0007669"/>
    <property type="project" value="UniProtKB-UniRule"/>
</dbReference>
<dbReference type="GO" id="GO:0000049">
    <property type="term" value="F:tRNA binding"/>
    <property type="evidence" value="ECO:0007669"/>
    <property type="project" value="UniProtKB-KW"/>
</dbReference>
<dbReference type="GO" id="GO:0006431">
    <property type="term" value="P:methionyl-tRNA aminoacylation"/>
    <property type="evidence" value="ECO:0007669"/>
    <property type="project" value="UniProtKB-UniRule"/>
</dbReference>
<dbReference type="CDD" id="cd07957">
    <property type="entry name" value="Anticodon_Ia_Met"/>
    <property type="match status" value="1"/>
</dbReference>
<dbReference type="CDD" id="cd00814">
    <property type="entry name" value="MetRS_core"/>
    <property type="match status" value="1"/>
</dbReference>
<dbReference type="CDD" id="cd02153">
    <property type="entry name" value="tRNA_bindingDomain"/>
    <property type="match status" value="1"/>
</dbReference>
<dbReference type="FunFam" id="2.20.28.20:FF:000001">
    <property type="entry name" value="Methionine--tRNA ligase"/>
    <property type="match status" value="1"/>
</dbReference>
<dbReference type="Gene3D" id="3.40.50.620">
    <property type="entry name" value="HUPs"/>
    <property type="match status" value="1"/>
</dbReference>
<dbReference type="Gene3D" id="1.10.730.10">
    <property type="entry name" value="Isoleucyl-tRNA Synthetase, Domain 1"/>
    <property type="match status" value="1"/>
</dbReference>
<dbReference type="Gene3D" id="2.20.28.20">
    <property type="entry name" value="Methionyl-tRNA synthetase, Zn-domain"/>
    <property type="match status" value="1"/>
</dbReference>
<dbReference type="Gene3D" id="2.40.50.140">
    <property type="entry name" value="Nucleic acid-binding proteins"/>
    <property type="match status" value="1"/>
</dbReference>
<dbReference type="HAMAP" id="MF_00098">
    <property type="entry name" value="Met_tRNA_synth_type1"/>
    <property type="match status" value="1"/>
</dbReference>
<dbReference type="InterPro" id="IPR001412">
    <property type="entry name" value="aa-tRNA-synth_I_CS"/>
</dbReference>
<dbReference type="InterPro" id="IPR041872">
    <property type="entry name" value="Anticodon_Met"/>
</dbReference>
<dbReference type="InterPro" id="IPR004495">
    <property type="entry name" value="Met-tRNA-synth_bsu_C"/>
</dbReference>
<dbReference type="InterPro" id="IPR023458">
    <property type="entry name" value="Met-tRNA_ligase_1"/>
</dbReference>
<dbReference type="InterPro" id="IPR014758">
    <property type="entry name" value="Met-tRNA_synth"/>
</dbReference>
<dbReference type="InterPro" id="IPR015413">
    <property type="entry name" value="Methionyl/Leucyl_tRNA_Synth"/>
</dbReference>
<dbReference type="InterPro" id="IPR033911">
    <property type="entry name" value="MetRS_core"/>
</dbReference>
<dbReference type="InterPro" id="IPR029038">
    <property type="entry name" value="MetRS_Zn"/>
</dbReference>
<dbReference type="InterPro" id="IPR012340">
    <property type="entry name" value="NA-bd_OB-fold"/>
</dbReference>
<dbReference type="InterPro" id="IPR014729">
    <property type="entry name" value="Rossmann-like_a/b/a_fold"/>
</dbReference>
<dbReference type="InterPro" id="IPR002547">
    <property type="entry name" value="tRNA-bd_dom"/>
</dbReference>
<dbReference type="InterPro" id="IPR009080">
    <property type="entry name" value="tRNAsynth_Ia_anticodon-bd"/>
</dbReference>
<dbReference type="NCBIfam" id="TIGR00398">
    <property type="entry name" value="metG"/>
    <property type="match status" value="1"/>
</dbReference>
<dbReference type="NCBIfam" id="TIGR00399">
    <property type="entry name" value="metG_C_term"/>
    <property type="match status" value="1"/>
</dbReference>
<dbReference type="NCBIfam" id="NF001100">
    <property type="entry name" value="PRK00133.1"/>
    <property type="match status" value="1"/>
</dbReference>
<dbReference type="PANTHER" id="PTHR45765">
    <property type="entry name" value="METHIONINE--TRNA LIGASE"/>
    <property type="match status" value="1"/>
</dbReference>
<dbReference type="PANTHER" id="PTHR45765:SF1">
    <property type="entry name" value="METHIONINE--TRNA LIGASE, CYTOPLASMIC"/>
    <property type="match status" value="1"/>
</dbReference>
<dbReference type="Pfam" id="PF19303">
    <property type="entry name" value="Anticodon_3"/>
    <property type="match status" value="1"/>
</dbReference>
<dbReference type="Pfam" id="PF09334">
    <property type="entry name" value="tRNA-synt_1g"/>
    <property type="match status" value="1"/>
</dbReference>
<dbReference type="Pfam" id="PF01588">
    <property type="entry name" value="tRNA_bind"/>
    <property type="match status" value="1"/>
</dbReference>
<dbReference type="PRINTS" id="PR01041">
    <property type="entry name" value="TRNASYNTHMET"/>
</dbReference>
<dbReference type="SUPFAM" id="SSF47323">
    <property type="entry name" value="Anticodon-binding domain of a subclass of class I aminoacyl-tRNA synthetases"/>
    <property type="match status" value="1"/>
</dbReference>
<dbReference type="SUPFAM" id="SSF57770">
    <property type="entry name" value="Methionyl-tRNA synthetase (MetRS), Zn-domain"/>
    <property type="match status" value="1"/>
</dbReference>
<dbReference type="SUPFAM" id="SSF50249">
    <property type="entry name" value="Nucleic acid-binding proteins"/>
    <property type="match status" value="1"/>
</dbReference>
<dbReference type="SUPFAM" id="SSF52374">
    <property type="entry name" value="Nucleotidylyl transferase"/>
    <property type="match status" value="1"/>
</dbReference>
<dbReference type="PROSITE" id="PS00178">
    <property type="entry name" value="AA_TRNA_LIGASE_I"/>
    <property type="match status" value="1"/>
</dbReference>
<dbReference type="PROSITE" id="PS50886">
    <property type="entry name" value="TRBD"/>
    <property type="match status" value="1"/>
</dbReference>
<comment type="function">
    <text evidence="1">Is required not only for elongation of protein synthesis but also for the initiation of all mRNA translation through initiator tRNA(fMet) aminoacylation.</text>
</comment>
<comment type="catalytic activity">
    <reaction evidence="1">
        <text>tRNA(Met) + L-methionine + ATP = L-methionyl-tRNA(Met) + AMP + diphosphate</text>
        <dbReference type="Rhea" id="RHEA:13481"/>
        <dbReference type="Rhea" id="RHEA-COMP:9667"/>
        <dbReference type="Rhea" id="RHEA-COMP:9698"/>
        <dbReference type="ChEBI" id="CHEBI:30616"/>
        <dbReference type="ChEBI" id="CHEBI:33019"/>
        <dbReference type="ChEBI" id="CHEBI:57844"/>
        <dbReference type="ChEBI" id="CHEBI:78442"/>
        <dbReference type="ChEBI" id="CHEBI:78530"/>
        <dbReference type="ChEBI" id="CHEBI:456215"/>
        <dbReference type="EC" id="6.1.1.10"/>
    </reaction>
</comment>
<comment type="cofactor">
    <cofactor evidence="1">
        <name>Zn(2+)</name>
        <dbReference type="ChEBI" id="CHEBI:29105"/>
    </cofactor>
    <text evidence="1">Binds 1 zinc ion per subunit.</text>
</comment>
<comment type="subunit">
    <text evidence="1">Homodimer.</text>
</comment>
<comment type="subcellular location">
    <subcellularLocation>
        <location evidence="1">Cytoplasm</location>
    </subcellularLocation>
</comment>
<comment type="similarity">
    <text evidence="1">Belongs to the class-I aminoacyl-tRNA synthetase family. MetG type 1 subfamily.</text>
</comment>
<gene>
    <name evidence="1" type="primary">metG</name>
    <name type="ordered locus">BG0600</name>
</gene>
<feature type="chain" id="PRO_0000139108" description="Methionine--tRNA ligase">
    <location>
        <begin position="1"/>
        <end position="724"/>
    </location>
</feature>
<feature type="domain" description="tRNA-binding" evidence="1">
    <location>
        <begin position="560"/>
        <end position="665"/>
    </location>
</feature>
<feature type="short sequence motif" description="'HIGH' region">
    <location>
        <begin position="12"/>
        <end position="22"/>
    </location>
</feature>
<feature type="short sequence motif" description="'KMSKS' region">
    <location>
        <begin position="330"/>
        <end position="334"/>
    </location>
</feature>
<feature type="binding site" evidence="1">
    <location>
        <position position="143"/>
    </location>
    <ligand>
        <name>Zn(2+)</name>
        <dbReference type="ChEBI" id="CHEBI:29105"/>
    </ligand>
</feature>
<feature type="binding site" evidence="1">
    <location>
        <position position="146"/>
    </location>
    <ligand>
        <name>Zn(2+)</name>
        <dbReference type="ChEBI" id="CHEBI:29105"/>
    </ligand>
</feature>
<feature type="binding site" evidence="1">
    <location>
        <position position="155"/>
    </location>
    <ligand>
        <name>Zn(2+)</name>
        <dbReference type="ChEBI" id="CHEBI:29105"/>
    </ligand>
</feature>
<feature type="binding site" evidence="1">
    <location>
        <position position="158"/>
    </location>
    <ligand>
        <name>Zn(2+)</name>
        <dbReference type="ChEBI" id="CHEBI:29105"/>
    </ligand>
</feature>
<feature type="binding site" evidence="1">
    <location>
        <position position="333"/>
    </location>
    <ligand>
        <name>ATP</name>
        <dbReference type="ChEBI" id="CHEBI:30616"/>
    </ligand>
</feature>
<keyword id="KW-0030">Aminoacyl-tRNA synthetase</keyword>
<keyword id="KW-0067">ATP-binding</keyword>
<keyword id="KW-0963">Cytoplasm</keyword>
<keyword id="KW-0436">Ligase</keyword>
<keyword id="KW-0479">Metal-binding</keyword>
<keyword id="KW-0547">Nucleotide-binding</keyword>
<keyword id="KW-0648">Protein biosynthesis</keyword>
<keyword id="KW-0694">RNA-binding</keyword>
<keyword id="KW-0820">tRNA-binding</keyword>
<keyword id="KW-0862">Zinc</keyword>
<protein>
    <recommendedName>
        <fullName evidence="1">Methionine--tRNA ligase</fullName>
        <ecNumber evidence="1">6.1.1.10</ecNumber>
    </recommendedName>
    <alternativeName>
        <fullName evidence="1">Methionyl-tRNA synthetase</fullName>
        <shortName evidence="1">MetRS</shortName>
    </alternativeName>
</protein>
<proteinExistence type="inferred from homology"/>
<name>SYM_BORGP</name>
<reference key="1">
    <citation type="journal article" date="2004" name="Nucleic Acids Res.">
        <title>Comparative analysis of the Borrelia garinii genome.</title>
        <authorList>
            <person name="Gloeckner G."/>
            <person name="Lehmann R."/>
            <person name="Romualdi A."/>
            <person name="Pradella S."/>
            <person name="Schulte-Spechtel U."/>
            <person name="Schilhabel M."/>
            <person name="Wilske B."/>
            <person name="Suehnel J."/>
            <person name="Platzer M."/>
        </authorList>
    </citation>
    <scope>NUCLEOTIDE SEQUENCE [LARGE SCALE GENOMIC DNA]</scope>
    <source>
        <strain>ATCC BAA-2496 / DSM 23469 / PBi</strain>
    </source>
</reference>
<accession>Q660T5</accession>
<evidence type="ECO:0000255" key="1">
    <source>
        <dbReference type="HAMAP-Rule" id="MF_00098"/>
    </source>
</evidence>